<organism>
    <name type="scientific">Shewanella denitrificans (strain OS217 / ATCC BAA-1090 / DSM 15013)</name>
    <dbReference type="NCBI Taxonomy" id="318161"/>
    <lineage>
        <taxon>Bacteria</taxon>
        <taxon>Pseudomonadati</taxon>
        <taxon>Pseudomonadota</taxon>
        <taxon>Gammaproteobacteria</taxon>
        <taxon>Alteromonadales</taxon>
        <taxon>Shewanellaceae</taxon>
        <taxon>Shewanella</taxon>
    </lineage>
</organism>
<reference key="1">
    <citation type="submission" date="2006-03" db="EMBL/GenBank/DDBJ databases">
        <title>Complete sequence of Shewanella denitrificans OS217.</title>
        <authorList>
            <consortium name="US DOE Joint Genome Institute"/>
            <person name="Copeland A."/>
            <person name="Lucas S."/>
            <person name="Lapidus A."/>
            <person name="Barry K."/>
            <person name="Detter J.C."/>
            <person name="Glavina del Rio T."/>
            <person name="Hammon N."/>
            <person name="Israni S."/>
            <person name="Dalin E."/>
            <person name="Tice H."/>
            <person name="Pitluck S."/>
            <person name="Brettin T."/>
            <person name="Bruce D."/>
            <person name="Han C."/>
            <person name="Tapia R."/>
            <person name="Gilna P."/>
            <person name="Kiss H."/>
            <person name="Schmutz J."/>
            <person name="Larimer F."/>
            <person name="Land M."/>
            <person name="Hauser L."/>
            <person name="Kyrpides N."/>
            <person name="Lykidis A."/>
            <person name="Richardson P."/>
        </authorList>
    </citation>
    <scope>NUCLEOTIDE SEQUENCE [LARGE SCALE GENOMIC DNA]</scope>
    <source>
        <strain>OS217 / ATCC BAA-1090 / DSM 15013</strain>
    </source>
</reference>
<sequence>MLSNSSQVILRNSDYFQHQDVLILNYEADTLGLSLLAHAKSVTALALDFNHYLQLAAKEQPQLACFFGHTLPSSFAGKTFDSVIVFFPKAKSLAPYLFELAANHLNIDGQLMIVGDNKGGIKSVAKLIPDCFSAPVKRDNARHCLLYTCQLERQGRDFKLENWLSQYSLSTPQGEIIICNLVGVFSEKHLDLGTELLLSHLPKLEGRVLDFGCGAGVITVALLKAMPKLELECIDINAMALASCELTLQANKLQAKVYPSDGLTQVTGAFDAIISNPPFHDGLTSTTDIATQFVAMSEKQLKSKGIWQIVANRHLPYASTIAQVFGNFDVPAENNKFKLYACRKK</sequence>
<comment type="function">
    <text evidence="1">Specifically methylates the guanine in position 1207 of 16S rRNA in the 30S particle.</text>
</comment>
<comment type="catalytic activity">
    <reaction evidence="1">
        <text>guanosine(1207) in 16S rRNA + S-adenosyl-L-methionine = N(2)-methylguanosine(1207) in 16S rRNA + S-adenosyl-L-homocysteine + H(+)</text>
        <dbReference type="Rhea" id="RHEA:42736"/>
        <dbReference type="Rhea" id="RHEA-COMP:10213"/>
        <dbReference type="Rhea" id="RHEA-COMP:10214"/>
        <dbReference type="ChEBI" id="CHEBI:15378"/>
        <dbReference type="ChEBI" id="CHEBI:57856"/>
        <dbReference type="ChEBI" id="CHEBI:59789"/>
        <dbReference type="ChEBI" id="CHEBI:74269"/>
        <dbReference type="ChEBI" id="CHEBI:74481"/>
        <dbReference type="EC" id="2.1.1.172"/>
    </reaction>
</comment>
<comment type="subunit">
    <text evidence="1">Monomer.</text>
</comment>
<comment type="subcellular location">
    <subcellularLocation>
        <location evidence="1">Cytoplasm</location>
    </subcellularLocation>
</comment>
<comment type="similarity">
    <text evidence="1">Belongs to the methyltransferase superfamily. RsmC family.</text>
</comment>
<proteinExistence type="inferred from homology"/>
<protein>
    <recommendedName>
        <fullName evidence="1">Ribosomal RNA small subunit methyltransferase C</fullName>
        <ecNumber evidence="1">2.1.1.172</ecNumber>
    </recommendedName>
    <alternativeName>
        <fullName evidence="1">16S rRNA m2G1207 methyltransferase</fullName>
    </alternativeName>
    <alternativeName>
        <fullName evidence="1">rRNA (guanine-N(2)-)-methyltransferase RsmC</fullName>
    </alternativeName>
</protein>
<gene>
    <name evidence="1" type="primary">rsmC</name>
    <name type="ordered locus">Sden_2977</name>
</gene>
<evidence type="ECO:0000255" key="1">
    <source>
        <dbReference type="HAMAP-Rule" id="MF_01862"/>
    </source>
</evidence>
<dbReference type="EC" id="2.1.1.172" evidence="1"/>
<dbReference type="EMBL" id="CP000302">
    <property type="protein sequence ID" value="ABE56255.1"/>
    <property type="molecule type" value="Genomic_DNA"/>
</dbReference>
<dbReference type="RefSeq" id="WP_011497403.1">
    <property type="nucleotide sequence ID" value="NC_007954.1"/>
</dbReference>
<dbReference type="SMR" id="Q12JX1"/>
<dbReference type="STRING" id="318161.Sden_2977"/>
<dbReference type="KEGG" id="sdn:Sden_2977"/>
<dbReference type="eggNOG" id="COG2813">
    <property type="taxonomic scope" value="Bacteria"/>
</dbReference>
<dbReference type="HOGENOM" id="CLU_049581_0_1_6"/>
<dbReference type="OrthoDB" id="9816072at2"/>
<dbReference type="Proteomes" id="UP000001982">
    <property type="component" value="Chromosome"/>
</dbReference>
<dbReference type="GO" id="GO:0005737">
    <property type="term" value="C:cytoplasm"/>
    <property type="evidence" value="ECO:0007669"/>
    <property type="project" value="UniProtKB-SubCell"/>
</dbReference>
<dbReference type="GO" id="GO:0052914">
    <property type="term" value="F:16S rRNA (guanine(1207)-N(2))-methyltransferase activity"/>
    <property type="evidence" value="ECO:0007669"/>
    <property type="project" value="UniProtKB-EC"/>
</dbReference>
<dbReference type="GO" id="GO:0003676">
    <property type="term" value="F:nucleic acid binding"/>
    <property type="evidence" value="ECO:0007669"/>
    <property type="project" value="InterPro"/>
</dbReference>
<dbReference type="CDD" id="cd02440">
    <property type="entry name" value="AdoMet_MTases"/>
    <property type="match status" value="1"/>
</dbReference>
<dbReference type="Gene3D" id="3.40.50.150">
    <property type="entry name" value="Vaccinia Virus protein VP39"/>
    <property type="match status" value="2"/>
</dbReference>
<dbReference type="HAMAP" id="MF_01862">
    <property type="entry name" value="16SrRNA_methyltr_C"/>
    <property type="match status" value="1"/>
</dbReference>
<dbReference type="InterPro" id="IPR002052">
    <property type="entry name" value="DNA_methylase_N6_adenine_CS"/>
</dbReference>
<dbReference type="InterPro" id="IPR013675">
    <property type="entry name" value="Mtase_sm_N"/>
</dbReference>
<dbReference type="InterPro" id="IPR023543">
    <property type="entry name" value="rRNA_ssu_MeTfrase_C"/>
</dbReference>
<dbReference type="InterPro" id="IPR046977">
    <property type="entry name" value="RsmC/RlmG"/>
</dbReference>
<dbReference type="InterPro" id="IPR029063">
    <property type="entry name" value="SAM-dependent_MTases_sf"/>
</dbReference>
<dbReference type="InterPro" id="IPR007848">
    <property type="entry name" value="Small_mtfrase_dom"/>
</dbReference>
<dbReference type="PANTHER" id="PTHR47816">
    <property type="entry name" value="RIBOSOMAL RNA SMALL SUBUNIT METHYLTRANSFERASE C"/>
    <property type="match status" value="1"/>
</dbReference>
<dbReference type="PANTHER" id="PTHR47816:SF4">
    <property type="entry name" value="RIBOSOMAL RNA SMALL SUBUNIT METHYLTRANSFERASE C"/>
    <property type="match status" value="1"/>
</dbReference>
<dbReference type="Pfam" id="PF05175">
    <property type="entry name" value="MTS"/>
    <property type="match status" value="1"/>
</dbReference>
<dbReference type="Pfam" id="PF08468">
    <property type="entry name" value="MTS_N"/>
    <property type="match status" value="1"/>
</dbReference>
<dbReference type="SUPFAM" id="SSF53335">
    <property type="entry name" value="S-adenosyl-L-methionine-dependent methyltransferases"/>
    <property type="match status" value="1"/>
</dbReference>
<keyword id="KW-0963">Cytoplasm</keyword>
<keyword id="KW-0489">Methyltransferase</keyword>
<keyword id="KW-1185">Reference proteome</keyword>
<keyword id="KW-0698">rRNA processing</keyword>
<keyword id="KW-0949">S-adenosyl-L-methionine</keyword>
<keyword id="KW-0808">Transferase</keyword>
<accession>Q12JX1</accession>
<name>RSMC_SHEDO</name>
<feature type="chain" id="PRO_0000369770" description="Ribosomal RNA small subunit methyltransferase C">
    <location>
        <begin position="1"/>
        <end position="345"/>
    </location>
</feature>